<feature type="chain" id="PRO_0000120940" description="Putative RNA exonuclease pqe-1">
    <location>
        <begin position="1"/>
        <end position="1647"/>
    </location>
</feature>
<feature type="domain" description="Exonuclease" evidence="1">
    <location>
        <begin position="1477"/>
        <end position="1637"/>
    </location>
</feature>
<feature type="region of interest" description="Disordered" evidence="2">
    <location>
        <begin position="1"/>
        <end position="199"/>
    </location>
</feature>
<feature type="region of interest" description="Disordered" evidence="2">
    <location>
        <begin position="274"/>
        <end position="393"/>
    </location>
</feature>
<feature type="region of interest" description="Disordered" evidence="2">
    <location>
        <begin position="515"/>
        <end position="619"/>
    </location>
</feature>
<feature type="region of interest" description="Disordered" evidence="2">
    <location>
        <begin position="641"/>
        <end position="665"/>
    </location>
</feature>
<feature type="region of interest" description="Disordered" evidence="2">
    <location>
        <begin position="736"/>
        <end position="1174"/>
    </location>
</feature>
<feature type="coiled-coil region" evidence="1">
    <location>
        <begin position="686"/>
        <end position="726"/>
    </location>
</feature>
<feature type="coiled-coil region" evidence="1">
    <location>
        <begin position="1142"/>
        <end position="1187"/>
    </location>
</feature>
<feature type="compositionally biased region" description="Low complexity" evidence="2">
    <location>
        <begin position="30"/>
        <end position="64"/>
    </location>
</feature>
<feature type="compositionally biased region" description="Low complexity" evidence="2">
    <location>
        <begin position="99"/>
        <end position="131"/>
    </location>
</feature>
<feature type="compositionally biased region" description="Polar residues" evidence="2">
    <location>
        <begin position="143"/>
        <end position="170"/>
    </location>
</feature>
<feature type="compositionally biased region" description="Low complexity" evidence="2">
    <location>
        <begin position="274"/>
        <end position="297"/>
    </location>
</feature>
<feature type="compositionally biased region" description="Low complexity" evidence="2">
    <location>
        <begin position="515"/>
        <end position="526"/>
    </location>
</feature>
<feature type="compositionally biased region" description="Pro residues" evidence="2">
    <location>
        <begin position="527"/>
        <end position="540"/>
    </location>
</feature>
<feature type="compositionally biased region" description="Low complexity" evidence="2">
    <location>
        <begin position="541"/>
        <end position="555"/>
    </location>
</feature>
<feature type="compositionally biased region" description="Basic and acidic residues" evidence="2">
    <location>
        <begin position="592"/>
        <end position="601"/>
    </location>
</feature>
<feature type="compositionally biased region" description="Low complexity" evidence="2">
    <location>
        <begin position="650"/>
        <end position="664"/>
    </location>
</feature>
<feature type="compositionally biased region" description="Polar residues" evidence="2">
    <location>
        <begin position="736"/>
        <end position="756"/>
    </location>
</feature>
<feature type="compositionally biased region" description="Low complexity" evidence="2">
    <location>
        <begin position="761"/>
        <end position="772"/>
    </location>
</feature>
<feature type="compositionally biased region" description="Acidic residues" evidence="2">
    <location>
        <begin position="783"/>
        <end position="793"/>
    </location>
</feature>
<feature type="compositionally biased region" description="Basic and acidic residues" evidence="2">
    <location>
        <begin position="822"/>
        <end position="833"/>
    </location>
</feature>
<feature type="compositionally biased region" description="Acidic residues" evidence="2">
    <location>
        <begin position="878"/>
        <end position="905"/>
    </location>
</feature>
<feature type="compositionally biased region" description="Low complexity" evidence="2">
    <location>
        <begin position="977"/>
        <end position="992"/>
    </location>
</feature>
<feature type="compositionally biased region" description="Basic and acidic residues" evidence="2">
    <location>
        <begin position="1018"/>
        <end position="1031"/>
    </location>
</feature>
<feature type="compositionally biased region" description="Polar residues" evidence="2">
    <location>
        <begin position="1038"/>
        <end position="1054"/>
    </location>
</feature>
<feature type="compositionally biased region" description="Basic and acidic residues" evidence="2">
    <location>
        <begin position="1076"/>
        <end position="1088"/>
    </location>
</feature>
<feature type="compositionally biased region" description="Basic and acidic residues" evidence="2">
    <location>
        <begin position="1139"/>
        <end position="1174"/>
    </location>
</feature>
<feature type="splice variant" id="VSP_060514" description="In isoform f." evidence="6">
    <location>
        <begin position="1"/>
        <end position="1207"/>
    </location>
</feature>
<feature type="splice variant" id="VSP_060515" description="In isoform c and isoform g." evidence="6">
    <location>
        <begin position="96"/>
        <end position="1072"/>
    </location>
</feature>
<feature type="splice variant" id="VSP_060516" description="In isoform a." evidence="6">
    <original>KKDAKSSEN</original>
    <variation>VRRCGGDNV</variation>
    <location>
        <begin position="1073"/>
        <end position="1081"/>
    </location>
</feature>
<feature type="splice variant" id="VSP_060517" description="In isoform a." evidence="6">
    <location>
        <begin position="1082"/>
        <end position="1647"/>
    </location>
</feature>
<feature type="splice variant" id="VSP_060518" description="In isoform g." evidence="6">
    <original>N</original>
    <variation>NFQ</variation>
    <location>
        <position position="1091"/>
    </location>
</feature>
<feature type="splice variant" id="VSP_060519" description="In isoform f." evidence="6">
    <original>AKKQKPAPAVPKILDFSVGRTFTAIRQTAIKLVFDTFLERDSPNAAREAQEFELSIAKQYTDGQKYRINIGHKVAALRKENTSGILEVNKNA</original>
    <variation>MSTYYQSAPVLVHAHAYQPPLSPPQSPPHGYLPFYTSNPMMCSTSPLYFSPQMVQPLPPQQHYHMYPSTSAGPGMYYTDFNPHYVQIQISQS</variation>
    <location>
        <begin position="1208"/>
        <end position="1299"/>
    </location>
</feature>
<comment type="function">
    <text evidence="3 4">Putative RNA exonuclease which protects neurons from the toxic effects of expanded poly-Q disease proteins (PubMed:12486229). It is unknown whether this is via participation in the pathogenic mechanism underlying poly-Q-induced neurodegeneration or if it is by acting as a genetic modifier of the age of onset or progression of neurodegeneration (PubMed:12486229). Regulates gene expression in neurons (PubMed:22870397).</text>
</comment>
<comment type="subcellular location">
    <molecule>Isoform a</molecule>
    <subcellularLocation>
        <location evidence="3 4">Nucleus</location>
    </subcellularLocation>
    <text evidence="4">Forms aggregates in the nucleus.</text>
</comment>
<comment type="alternative products">
    <event type="alternative splicing"/>
    <isoform>
        <id>Q10124-1</id>
        <name evidence="8">b</name>
        <name evidence="5">Pqe-1A</name>
        <sequence type="displayed"/>
    </isoform>
    <isoform>
        <id>Q10124-2</id>
        <name evidence="7">a</name>
        <name evidence="5">Pqe-1C</name>
        <sequence type="described" ref="VSP_060516 VSP_060517"/>
    </isoform>
    <isoform>
        <id>Q10124-3</id>
        <name evidence="9">c</name>
        <name evidence="5">Pqe-1B</name>
        <sequence type="described" ref="VSP_060515"/>
    </isoform>
    <isoform>
        <id>Q10124-6</id>
        <name evidence="10">f</name>
        <sequence type="described" ref="VSP_060514 VSP_060519"/>
    </isoform>
    <isoform>
        <id>Q10124-7</id>
        <name evidence="11">g</name>
        <sequence type="described" ref="VSP_060515 VSP_060518"/>
    </isoform>
</comment>
<comment type="tissue specificity">
    <text evidence="4">Expressed in the excretory canal, vulval cells, the intestine and in head and tail neurons including ASH, RIC and AIZ neurons.</text>
</comment>
<comment type="domain">
    <text>The Gln/Pro-rich N-terminus and the Arg/Asp/Glu/Lys-rich charged domain are critical in protecting glutamatergic ASH sensory neurons from degeneration. ASH neurons expressing isoforms lacking these domains show progressive degeneration.</text>
</comment>
<comment type="similarity">
    <text evidence="6">Belongs to the REXO1/REXO3 family.</text>
</comment>
<evidence type="ECO:0000255" key="1"/>
<evidence type="ECO:0000256" key="2">
    <source>
        <dbReference type="SAM" id="MobiDB-lite"/>
    </source>
</evidence>
<evidence type="ECO:0000269" key="3">
    <source>
    </source>
</evidence>
<evidence type="ECO:0000269" key="4">
    <source>
    </source>
</evidence>
<evidence type="ECO:0000303" key="5">
    <source>
    </source>
</evidence>
<evidence type="ECO:0000305" key="6"/>
<evidence type="ECO:0000312" key="7">
    <source>
        <dbReference type="WormBase" id="F52C9.8a"/>
    </source>
</evidence>
<evidence type="ECO:0000312" key="8">
    <source>
        <dbReference type="WormBase" id="F52C9.8b"/>
    </source>
</evidence>
<evidence type="ECO:0000312" key="9">
    <source>
        <dbReference type="WormBase" id="F52C9.8c"/>
    </source>
</evidence>
<evidence type="ECO:0000312" key="10">
    <source>
        <dbReference type="WormBase" id="F52C9.8f"/>
    </source>
</evidence>
<evidence type="ECO:0000312" key="11">
    <source>
        <dbReference type="WormBase" id="F52C9.8g"/>
    </source>
</evidence>
<sequence>MFNGGYGSGNSFNLQNYAPIDPMTGIPGFGPSQNAQQQQQQASAPGTSSGGPSQAVSGASSGASMKTEPVARQVSTAQMKRDLEQAAVYVPTPIPEGSTQPQQRQQQQSQPQARQMSTQQAANLRKNAAAAGTPPKQAMQGASREQGNAHQPTAGQIPQSSNQPAQQTHNVPRMPQPLQQVPHPSPVRGSHPAAQQVQNAPQRIPQHVPMPQGVAPHQVIQQVRAPNIGASQMVQQAPSRGHTGAAPASRMAQQPVPLHQGVAPHQAAPQTIQQTPARGRPANAQLAQNAQQRNPQQVPMPQGVAPHHIPPQALGPHGAAPQMTQQAPARGPSGAAQHAQNAHRMTHQQVPLQAPVQGPHRGAPQMAQQPGPHGAAQHPSSGTVAPMHITSLPGNHPLNRTHLLFNRQVVPALDIRNLIAQHRLMVDDFVRAQICYRLPENHQDYWPPGGHPIPMQQQQMRQGAGLPNMAMPPPPLMRHPGPHQNPIHAMQSMQVQPPLSPDQMNMQMFQQRALMMQQQAMQMQMQNPPPVHQQPPPQQPPQQQRQKQQRSQPAPARVPPQVPSQVPVTGGVAADEPPPPCSYSPVAQSSESKIEPVDVKPRVAPVPPQVPVTPTKPVITNNKKKRIDVVTLDEDAPRRVQVKQEIPEVSSTSDATKSDAAPTARGAVRIKQEVESDVAPNTILISAKKFERMKAEAEDKEDMKKKIAALQEALFNIQEERRVEKEIAAFATTNQAVPQNQPASSVQIAQVSTSESDAPGTSEAAATETMTSPKTKNNVIVETEGEQEEDEDEIPIKKSKKRRAKIVSNDEEEEPVRHPKRRSDEKREKRHVSYAESDDDMPVVKKKRRNQSPEDPEYSAASPSEDEDDDIGSFVVSDNEDDDADSFVVGDDEPIEYEEEDEDDMIERRSSRKRRSDSRSKKSATPTDRRRSRDTPTGSRSMRSTSPNDRRKSRETPPGNRSMRRTSPSDGRKSRDTPTASSSMSSSTLSYCKKSKETPMSYEEIEQQKKAKRQRNCKTREENRERKRLAQLEELESSETTGVRRTLRSTQDNSDPLDASLATTIEEFRKTKKKDAKSSENRAKEKQKPMNKRPTSSASVDSNDDGVHIPAKRMAHASSVPGPSRSKPPMIGAVKNRPNHTEMLDKRNKESEEKRRKDRDELERLRNKKHTTEEEKIKMARLQNALKVVGKAAGLKATVKKELTGSPAKKQKPAPAVPKILDFSVGRTFTAIRQTAIKLVFDTFLERDSPNAAREAQEFELSIAKQYTDGQKYRINIGHKVAALRKENTSGILEVNKNAVSHDKILAGGPKDNCTVARGRKTHVDHRQLSIEKLHPLLLQFKLTTSELETNAYPMRRDGSTKAVSIADTVYTQNKKMFLDDYDMSRNCSRCNKEFKLSPNGTMIRSTGICRYHNRGVAINGKRDTFRKRYSCCNEEFNVALGCKFSDVHVTDQLFKKELSTFVSTPVPVPNDQRSTRVYALDCEMVYTIAGPALARLTMVDMQRNRVLDVFVKPPTDVLDPNTEFSGLTMEQINSAPDTLKTCHQKLFKYVNADTILIGHSLESDLKAMRVVHKNVIDTAILFRSTRDTKVALKVLSAKLLHKNIQGDNEDAIGHDSMEDALTCVDLIFYGLRNPESIAIREANTNC</sequence>
<reference key="1">
    <citation type="journal article" date="2002" name="Proc. Natl. Acad. Sci. U.S.A.">
        <title>Glutamine/proline-rich PQE-1 proteins protect Caenorhabditis elegans neurons from huntingtin polyglutamine neurotoxicity.</title>
        <authorList>
            <person name="Faber P.W."/>
            <person name="Voisine C."/>
            <person name="King D.C."/>
            <person name="Bates E.A."/>
            <person name="Hart A.C."/>
        </authorList>
    </citation>
    <scope>NUCLEOTIDE SEQUENCE [GENOMIC DNA] (ISOFORMS A; B AND C)</scope>
    <scope>FUNCTION</scope>
    <scope>SUBCELLULAR LOCATION</scope>
</reference>
<reference key="2">
    <citation type="journal article" date="1998" name="Science">
        <title>Genome sequence of the nematode C. elegans: a platform for investigating biology.</title>
        <authorList>
            <consortium name="The C. elegans sequencing consortium"/>
        </authorList>
    </citation>
    <scope>NUCLEOTIDE SEQUENCE [LARGE SCALE GENOMIC DNA]</scope>
    <source>
        <strain>Bristol N2</strain>
    </source>
</reference>
<reference key="3">
    <citation type="journal article" date="2012" name="G3 (Bethesda)">
        <title>Mutations in the pqe-1 gene enhance transgene expression in Caenorhabditis elegans.</title>
        <authorList>
            <person name="Yamada K."/>
            <person name="Tsuchiya J."/>
            <person name="Iino Y."/>
        </authorList>
    </citation>
    <scope>FUNCTION</scope>
    <scope>SUBCELLULAR LOCATION</scope>
    <scope>TISSUE SPECIFICITY</scope>
</reference>
<accession>Q10124</accession>
<accession>G8JYC4</accession>
<accession>Q8MQ26</accession>
<accession>Q8MQ27</accession>
<accession>Q8MQ28</accession>
<accession>Q8MQ29</accession>
<accession>Q8MQ30</accession>
<accession>Q8MQ31</accession>
<keyword id="KW-0025">Alternative splicing</keyword>
<keyword id="KW-0175">Coiled coil</keyword>
<keyword id="KW-0269">Exonuclease</keyword>
<keyword id="KW-0378">Hydrolase</keyword>
<keyword id="KW-0540">Nuclease</keyword>
<keyword id="KW-0539">Nucleus</keyword>
<keyword id="KW-1185">Reference proteome</keyword>
<gene>
    <name evidence="8" type="primary">pqe-1</name>
    <name evidence="8" type="ORF">F52C9.8</name>
</gene>
<protein>
    <recommendedName>
        <fullName>Putative RNA exonuclease pqe-1</fullName>
    </recommendedName>
    <alternativeName>
        <fullName>PolyQ enhancer protein 1</fullName>
    </alternativeName>
</protein>
<dbReference type="EMBL" id="BX284603">
    <property type="protein sequence ID" value="CCD71610.1"/>
    <property type="molecule type" value="Genomic_DNA"/>
</dbReference>
<dbReference type="EMBL" id="BX284603">
    <property type="protein sequence ID" value="CCD71611.1"/>
    <property type="molecule type" value="Genomic_DNA"/>
</dbReference>
<dbReference type="EMBL" id="BX284603">
    <property type="protein sequence ID" value="CCD71612.1"/>
    <property type="molecule type" value="Genomic_DNA"/>
</dbReference>
<dbReference type="EMBL" id="BX284603">
    <property type="protein sequence ID" value="CCD71615.1"/>
    <property type="molecule type" value="Genomic_DNA"/>
</dbReference>
<dbReference type="EMBL" id="BX284603">
    <property type="protein sequence ID" value="CCD71616.1"/>
    <property type="molecule type" value="Genomic_DNA"/>
</dbReference>
<dbReference type="PIR" id="T16421">
    <property type="entry name" value="T16421"/>
</dbReference>
<dbReference type="RefSeq" id="NP_001040854.1">
    <molecule id="Q10124-7"/>
    <property type="nucleotide sequence ID" value="NM_001047389.4"/>
</dbReference>
<dbReference type="RefSeq" id="NP_001370742.1">
    <molecule id="Q10124-2"/>
    <property type="nucleotide sequence ID" value="NM_001382869.2"/>
</dbReference>
<dbReference type="RefSeq" id="NP_498135.2">
    <molecule id="Q10124-1"/>
    <property type="nucleotide sequence ID" value="NM_065734.5"/>
</dbReference>
<dbReference type="RefSeq" id="NP_498136.2">
    <molecule id="Q10124-3"/>
    <property type="nucleotide sequence ID" value="NM_065735.5"/>
</dbReference>
<dbReference type="RefSeq" id="NP_498137.2">
    <property type="nucleotide sequence ID" value="NM_065736.5"/>
</dbReference>
<dbReference type="RefSeq" id="NP_741135.1">
    <molecule id="Q10124-6"/>
    <property type="nucleotide sequence ID" value="NM_171120.6"/>
</dbReference>
<dbReference type="SMR" id="Q10124"/>
<dbReference type="BioGRID" id="40962">
    <property type="interactions" value="2"/>
</dbReference>
<dbReference type="DIP" id="DIP-26275N"/>
<dbReference type="FunCoup" id="Q10124">
    <property type="interactions" value="1687"/>
</dbReference>
<dbReference type="STRING" id="6239.F52C9.8b.1"/>
<dbReference type="iPTMnet" id="Q10124"/>
<dbReference type="PaxDb" id="6239-F52C9.8b"/>
<dbReference type="PeptideAtlas" id="Q10124"/>
<dbReference type="EnsemblMetazoa" id="F52C9.8a.1">
    <molecule id="Q10124-2"/>
    <property type="protein sequence ID" value="F52C9.8a.1"/>
    <property type="gene ID" value="WBGene00004095"/>
</dbReference>
<dbReference type="EnsemblMetazoa" id="F52C9.8a.2">
    <molecule id="Q10124-2"/>
    <property type="protein sequence ID" value="F52C9.8a.2"/>
    <property type="gene ID" value="WBGene00004095"/>
</dbReference>
<dbReference type="EnsemblMetazoa" id="F52C9.8a.3">
    <molecule id="Q10124-2"/>
    <property type="protein sequence ID" value="F52C9.8a.3"/>
    <property type="gene ID" value="WBGene00004095"/>
</dbReference>
<dbReference type="EnsemblMetazoa" id="F52C9.8a.4">
    <molecule id="Q10124-2"/>
    <property type="protein sequence ID" value="F52C9.8a.4"/>
    <property type="gene ID" value="WBGene00004095"/>
</dbReference>
<dbReference type="EnsemblMetazoa" id="F52C9.8b.1">
    <molecule id="Q10124-1"/>
    <property type="protein sequence ID" value="F52C9.8b.1"/>
    <property type="gene ID" value="WBGene00004095"/>
</dbReference>
<dbReference type="EnsemblMetazoa" id="F52C9.8c.1">
    <molecule id="Q10124-3"/>
    <property type="protein sequence ID" value="F52C9.8c.1"/>
    <property type="gene ID" value="WBGene00004095"/>
</dbReference>
<dbReference type="EnsemblMetazoa" id="F52C9.8f.1">
    <molecule id="Q10124-6"/>
    <property type="protein sequence ID" value="F52C9.8f.1"/>
    <property type="gene ID" value="WBGene00004095"/>
</dbReference>
<dbReference type="EnsemblMetazoa" id="F52C9.8g.1">
    <molecule id="Q10124-7"/>
    <property type="protein sequence ID" value="F52C9.8g.1"/>
    <property type="gene ID" value="WBGene00004095"/>
</dbReference>
<dbReference type="GeneID" id="175731"/>
<dbReference type="KEGG" id="cel:CELE_F52C9.8"/>
<dbReference type="UCSC" id="F52C9.8d.2">
    <molecule id="Q10124-1"/>
    <property type="organism name" value="c. elegans"/>
</dbReference>
<dbReference type="AGR" id="WB:WBGene00004095"/>
<dbReference type="CTD" id="175731"/>
<dbReference type="WormBase" id="F52C9.8a">
    <molecule id="Q10124-2"/>
    <property type="protein sequence ID" value="CE30802"/>
    <property type="gene ID" value="WBGene00004095"/>
    <property type="gene designation" value="pqe-1"/>
</dbReference>
<dbReference type="WormBase" id="F52C9.8b">
    <molecule id="Q10124-1"/>
    <property type="protein sequence ID" value="CE30998"/>
    <property type="gene ID" value="WBGene00004095"/>
    <property type="gene designation" value="pqe-1"/>
</dbReference>
<dbReference type="WormBase" id="F52C9.8c">
    <molecule id="Q10124-3"/>
    <property type="protein sequence ID" value="CE30672"/>
    <property type="gene ID" value="WBGene00004095"/>
    <property type="gene designation" value="pqe-1"/>
</dbReference>
<dbReference type="WormBase" id="F52C9.8f">
    <molecule id="Q10124-6"/>
    <property type="protein sequence ID" value="CE30675"/>
    <property type="gene ID" value="WBGene00004095"/>
    <property type="gene designation" value="pqe-1"/>
</dbReference>
<dbReference type="WormBase" id="F52C9.8g">
    <molecule id="Q10124-7"/>
    <property type="protein sequence ID" value="CE39256"/>
    <property type="gene ID" value="WBGene00004095"/>
    <property type="gene designation" value="pqe-1"/>
</dbReference>
<dbReference type="eggNOG" id="KOG2248">
    <property type="taxonomic scope" value="Eukaryota"/>
</dbReference>
<dbReference type="GeneTree" id="ENSGT00940000169529"/>
<dbReference type="HOGENOM" id="CLU_002891_0_0_1"/>
<dbReference type="InParanoid" id="Q10124"/>
<dbReference type="OMA" id="RPERENN"/>
<dbReference type="OrthoDB" id="206335at2759"/>
<dbReference type="PRO" id="PR:Q10124"/>
<dbReference type="Proteomes" id="UP000001940">
    <property type="component" value="Chromosome III"/>
</dbReference>
<dbReference type="Bgee" id="WBGene00004095">
    <property type="expression patterns" value="Expressed in embryo and 4 other cell types or tissues"/>
</dbReference>
<dbReference type="GO" id="GO:0005634">
    <property type="term" value="C:nucleus"/>
    <property type="evidence" value="ECO:0000314"/>
    <property type="project" value="WormBase"/>
</dbReference>
<dbReference type="GO" id="GO:0004527">
    <property type="term" value="F:exonuclease activity"/>
    <property type="evidence" value="ECO:0000318"/>
    <property type="project" value="GO_Central"/>
</dbReference>
<dbReference type="GO" id="GO:0003676">
    <property type="term" value="F:nucleic acid binding"/>
    <property type="evidence" value="ECO:0007669"/>
    <property type="project" value="InterPro"/>
</dbReference>
<dbReference type="GO" id="GO:0010629">
    <property type="term" value="P:negative regulation of gene expression"/>
    <property type="evidence" value="ECO:0000315"/>
    <property type="project" value="UniProtKB"/>
</dbReference>
<dbReference type="GO" id="GO:0031125">
    <property type="term" value="P:rRNA 3'-end processing"/>
    <property type="evidence" value="ECO:0000318"/>
    <property type="project" value="GO_Central"/>
</dbReference>
<dbReference type="CDD" id="cd06145">
    <property type="entry name" value="REX1_like"/>
    <property type="match status" value="1"/>
</dbReference>
<dbReference type="FunFam" id="3.30.420.10:FF:000031">
    <property type="entry name" value="RNA exonuclease 1"/>
    <property type="match status" value="1"/>
</dbReference>
<dbReference type="Gene3D" id="3.30.420.10">
    <property type="entry name" value="Ribonuclease H-like superfamily/Ribonuclease H"/>
    <property type="match status" value="1"/>
</dbReference>
<dbReference type="InterPro" id="IPR013520">
    <property type="entry name" value="Exonuclease_RNaseT/DNA_pol3"/>
</dbReference>
<dbReference type="InterPro" id="IPR034922">
    <property type="entry name" value="REX1-like_exo"/>
</dbReference>
<dbReference type="InterPro" id="IPR031736">
    <property type="entry name" value="REXO1-like_dom"/>
</dbReference>
<dbReference type="InterPro" id="IPR047021">
    <property type="entry name" value="REXO1/3/4-like"/>
</dbReference>
<dbReference type="InterPro" id="IPR012337">
    <property type="entry name" value="RNaseH-like_sf"/>
</dbReference>
<dbReference type="InterPro" id="IPR036397">
    <property type="entry name" value="RNaseH_sf"/>
</dbReference>
<dbReference type="PANTHER" id="PTHR12801:SF115">
    <property type="entry name" value="FI18136P1-RELATED"/>
    <property type="match status" value="1"/>
</dbReference>
<dbReference type="PANTHER" id="PTHR12801">
    <property type="entry name" value="RNA EXONUCLEASE REXO1 / RECO3 FAMILY MEMBER-RELATED"/>
    <property type="match status" value="1"/>
</dbReference>
<dbReference type="Pfam" id="PF15870">
    <property type="entry name" value="EloA-BP1"/>
    <property type="match status" value="1"/>
</dbReference>
<dbReference type="SMART" id="SM00479">
    <property type="entry name" value="EXOIII"/>
    <property type="match status" value="1"/>
</dbReference>
<dbReference type="SUPFAM" id="SSF53098">
    <property type="entry name" value="Ribonuclease H-like"/>
    <property type="match status" value="1"/>
</dbReference>
<proteinExistence type="evidence at transcript level"/>
<name>PQE1_CAEEL</name>
<organism>
    <name type="scientific">Caenorhabditis elegans</name>
    <dbReference type="NCBI Taxonomy" id="6239"/>
    <lineage>
        <taxon>Eukaryota</taxon>
        <taxon>Metazoa</taxon>
        <taxon>Ecdysozoa</taxon>
        <taxon>Nematoda</taxon>
        <taxon>Chromadorea</taxon>
        <taxon>Rhabditida</taxon>
        <taxon>Rhabditina</taxon>
        <taxon>Rhabditomorpha</taxon>
        <taxon>Rhabditoidea</taxon>
        <taxon>Rhabditidae</taxon>
        <taxon>Peloderinae</taxon>
        <taxon>Caenorhabditis</taxon>
    </lineage>
</organism>